<proteinExistence type="evidence at protein level"/>
<dbReference type="EC" id="1.7.2.5"/>
<dbReference type="EMBL" id="D38133">
    <property type="protein sequence ID" value="BAA07330.1"/>
    <property type="molecule type" value="Genomic_DNA"/>
</dbReference>
<dbReference type="EMBL" id="AE004091">
    <property type="protein sequence ID" value="AAG03913.1"/>
    <property type="molecule type" value="Genomic_DNA"/>
</dbReference>
<dbReference type="PIR" id="S53713">
    <property type="entry name" value="S53713"/>
</dbReference>
<dbReference type="RefSeq" id="NP_249215.1">
    <property type="nucleotide sequence ID" value="NC_002516.2"/>
</dbReference>
<dbReference type="RefSeq" id="WP_003113237.1">
    <property type="nucleotide sequence ID" value="NZ_QZGE01000010.1"/>
</dbReference>
<dbReference type="PDB" id="3O0R">
    <property type="method" value="X-ray"/>
    <property type="resolution" value="2.70 A"/>
    <property type="chains" value="B=1-466"/>
</dbReference>
<dbReference type="PDB" id="3WFB">
    <property type="method" value="X-ray"/>
    <property type="resolution" value="2.70 A"/>
    <property type="chains" value="B=1-466"/>
</dbReference>
<dbReference type="PDB" id="3WFC">
    <property type="method" value="X-ray"/>
    <property type="resolution" value="2.50 A"/>
    <property type="chains" value="B=1-466"/>
</dbReference>
<dbReference type="PDB" id="3WFD">
    <property type="method" value="X-ray"/>
    <property type="resolution" value="2.30 A"/>
    <property type="chains" value="B=1-466"/>
</dbReference>
<dbReference type="PDB" id="3WFE">
    <property type="method" value="X-ray"/>
    <property type="resolution" value="2.49 A"/>
    <property type="chains" value="B=1-466"/>
</dbReference>
<dbReference type="PDB" id="5GUW">
    <property type="method" value="X-ray"/>
    <property type="resolution" value="3.20 A"/>
    <property type="chains" value="B/D=1-466"/>
</dbReference>
<dbReference type="PDB" id="5GUX">
    <property type="method" value="X-ray"/>
    <property type="resolution" value="3.30 A"/>
    <property type="chains" value="B=1-466"/>
</dbReference>
<dbReference type="PDBsum" id="3O0R"/>
<dbReference type="PDBsum" id="3WFB"/>
<dbReference type="PDBsum" id="3WFC"/>
<dbReference type="PDBsum" id="3WFD"/>
<dbReference type="PDBsum" id="3WFE"/>
<dbReference type="PDBsum" id="5GUW"/>
<dbReference type="PDBsum" id="5GUX"/>
<dbReference type="SMR" id="Q59647"/>
<dbReference type="STRING" id="208964.PA0524"/>
<dbReference type="TCDB" id="3.D.4.10.3">
    <property type="family name" value="the proton-translocating cytochrome oxidase (cox) superfamily"/>
</dbReference>
<dbReference type="PaxDb" id="208964-PA0524"/>
<dbReference type="ABCD" id="Q59647">
    <property type="antibodies" value="1 sequenced antibody"/>
</dbReference>
<dbReference type="GeneID" id="882193"/>
<dbReference type="KEGG" id="pae:PA0524"/>
<dbReference type="PATRIC" id="fig|208964.12.peg.554"/>
<dbReference type="PseudoCAP" id="PA0524"/>
<dbReference type="HOGENOM" id="CLU_021582_1_0_6"/>
<dbReference type="InParanoid" id="Q59647"/>
<dbReference type="OrthoDB" id="9767153at2"/>
<dbReference type="PhylomeDB" id="Q59647"/>
<dbReference type="BioCyc" id="PAER208964:G1FZ6-529-MONOMER"/>
<dbReference type="BRENDA" id="1.7.2.5">
    <property type="organism ID" value="5087"/>
</dbReference>
<dbReference type="UniPathway" id="UPA00652">
    <property type="reaction ID" value="UER00708"/>
</dbReference>
<dbReference type="EvolutionaryTrace" id="Q59647"/>
<dbReference type="Proteomes" id="UP000002438">
    <property type="component" value="Chromosome"/>
</dbReference>
<dbReference type="GO" id="GO:0005886">
    <property type="term" value="C:plasma membrane"/>
    <property type="evidence" value="ECO:0007669"/>
    <property type="project" value="UniProtKB-SubCell"/>
</dbReference>
<dbReference type="GO" id="GO:0004129">
    <property type="term" value="F:cytochrome-c oxidase activity"/>
    <property type="evidence" value="ECO:0007669"/>
    <property type="project" value="InterPro"/>
</dbReference>
<dbReference type="GO" id="GO:0020037">
    <property type="term" value="F:heme binding"/>
    <property type="evidence" value="ECO:0007669"/>
    <property type="project" value="InterPro"/>
</dbReference>
<dbReference type="GO" id="GO:0046872">
    <property type="term" value="F:metal ion binding"/>
    <property type="evidence" value="ECO:0007669"/>
    <property type="project" value="UniProtKB-KW"/>
</dbReference>
<dbReference type="GO" id="GO:0016966">
    <property type="term" value="F:nitric oxide reductase activity"/>
    <property type="evidence" value="ECO:0007669"/>
    <property type="project" value="UniProtKB-EC"/>
</dbReference>
<dbReference type="GO" id="GO:0009060">
    <property type="term" value="P:aerobic respiration"/>
    <property type="evidence" value="ECO:0000318"/>
    <property type="project" value="GO_Central"/>
</dbReference>
<dbReference type="GO" id="GO:0019333">
    <property type="term" value="P:denitrification pathway"/>
    <property type="evidence" value="ECO:0007669"/>
    <property type="project" value="UniProtKB-UniPathway"/>
</dbReference>
<dbReference type="GO" id="GO:0022904">
    <property type="term" value="P:respiratory electron transport chain"/>
    <property type="evidence" value="ECO:0000318"/>
    <property type="project" value="GO_Central"/>
</dbReference>
<dbReference type="FunFam" id="1.20.210.10:FF:000010">
    <property type="entry name" value="Nitric oxide reductase subunit B"/>
    <property type="match status" value="1"/>
</dbReference>
<dbReference type="Gene3D" id="1.20.210.10">
    <property type="entry name" value="Cytochrome c oxidase-like, subunit I domain"/>
    <property type="match status" value="1"/>
</dbReference>
<dbReference type="InterPro" id="IPR023616">
    <property type="entry name" value="Cyt_c_oxase-like_su1_dom"/>
</dbReference>
<dbReference type="InterPro" id="IPR036927">
    <property type="entry name" value="Cyt_c_oxase-like_su1_sf"/>
</dbReference>
<dbReference type="InterPro" id="IPR000883">
    <property type="entry name" value="Cyt_C_Oxase_1"/>
</dbReference>
<dbReference type="InterPro" id="IPR023615">
    <property type="entry name" value="Cyt_c_Oxase_su1_BS"/>
</dbReference>
<dbReference type="PANTHER" id="PTHR10422">
    <property type="entry name" value="CYTOCHROME C OXIDASE SUBUNIT 1"/>
    <property type="match status" value="1"/>
</dbReference>
<dbReference type="PANTHER" id="PTHR10422:SF43">
    <property type="entry name" value="NITRIC OXIDE REDUCTASE SUBUNIT B"/>
    <property type="match status" value="1"/>
</dbReference>
<dbReference type="Pfam" id="PF00115">
    <property type="entry name" value="COX1"/>
    <property type="match status" value="1"/>
</dbReference>
<dbReference type="SUPFAM" id="SSF81442">
    <property type="entry name" value="Cytochrome c oxidase subunit I-like"/>
    <property type="match status" value="1"/>
</dbReference>
<dbReference type="PROSITE" id="PS50855">
    <property type="entry name" value="COX1"/>
    <property type="match status" value="1"/>
</dbReference>
<dbReference type="PROSITE" id="PS00077">
    <property type="entry name" value="COX1_CUB"/>
    <property type="match status" value="1"/>
</dbReference>
<name>NORB_PSEAE</name>
<keyword id="KW-0002">3D-structure</keyword>
<keyword id="KW-1003">Cell membrane</keyword>
<keyword id="KW-0249">Electron transport</keyword>
<keyword id="KW-0349">Heme</keyword>
<keyword id="KW-0408">Iron</keyword>
<keyword id="KW-0472">Membrane</keyword>
<keyword id="KW-0479">Metal-binding</keyword>
<keyword id="KW-0560">Oxidoreductase</keyword>
<keyword id="KW-1185">Reference proteome</keyword>
<keyword id="KW-0679">Respiratory chain</keyword>
<keyword id="KW-0812">Transmembrane</keyword>
<keyword id="KW-1133">Transmembrane helix</keyword>
<keyword id="KW-0813">Transport</keyword>
<protein>
    <recommendedName>
        <fullName>Nitric oxide reductase subunit B</fullName>
        <ecNumber>1.7.2.5</ecNumber>
    </recommendedName>
    <alternativeName>
        <fullName>NOR large subunit</fullName>
    </alternativeName>
    <alternativeName>
        <fullName>Nitric oxide reductase cytochrome b subunit</fullName>
    </alternativeName>
</protein>
<evidence type="ECO:0000250" key="1"/>
<evidence type="ECO:0000255" key="2"/>
<evidence type="ECO:0000305" key="3"/>
<evidence type="ECO:0007829" key="4">
    <source>
        <dbReference type="PDB" id="3WFD"/>
    </source>
</evidence>
<feature type="chain" id="PRO_0000183472" description="Nitric oxide reductase subunit B">
    <location>
        <begin position="1"/>
        <end position="466"/>
    </location>
</feature>
<feature type="transmembrane region" description="Helical" evidence="2">
    <location>
        <begin position="19"/>
        <end position="39"/>
    </location>
</feature>
<feature type="transmembrane region" description="Helical" evidence="2">
    <location>
        <begin position="61"/>
        <end position="81"/>
    </location>
</feature>
<feature type="transmembrane region" description="Helical" evidence="2">
    <location>
        <begin position="95"/>
        <end position="115"/>
    </location>
</feature>
<feature type="transmembrane region" description="Helical" evidence="2">
    <location>
        <begin position="142"/>
        <end position="162"/>
    </location>
</feature>
<feature type="transmembrane region" description="Helical" evidence="2">
    <location>
        <begin position="169"/>
        <end position="189"/>
    </location>
</feature>
<feature type="transmembrane region" description="Helical" evidence="2">
    <location>
        <begin position="205"/>
        <end position="225"/>
    </location>
</feature>
<feature type="transmembrane region" description="Helical" evidence="2">
    <location>
        <begin position="243"/>
        <end position="263"/>
    </location>
</feature>
<feature type="transmembrane region" description="Helical" evidence="2">
    <location>
        <begin position="270"/>
        <end position="290"/>
    </location>
</feature>
<feature type="transmembrane region" description="Helical" evidence="2">
    <location>
        <begin position="308"/>
        <end position="328"/>
    </location>
</feature>
<feature type="transmembrane region" description="Helical" evidence="2">
    <location>
        <begin position="349"/>
        <end position="369"/>
    </location>
</feature>
<feature type="transmembrane region" description="Helical" evidence="2">
    <location>
        <begin position="391"/>
        <end position="411"/>
    </location>
</feature>
<feature type="transmembrane region" description="Helical" evidence="2">
    <location>
        <begin position="434"/>
        <end position="454"/>
    </location>
</feature>
<feature type="binding site" description="axial binding residue" evidence="3">
    <location>
        <position position="60"/>
    </location>
    <ligand>
        <name>heme b</name>
        <dbReference type="ChEBI" id="CHEBI:60344"/>
        <label>1; low-spin</label>
    </ligand>
    <ligandPart>
        <name>Fe</name>
        <dbReference type="ChEBI" id="CHEBI:18248"/>
    </ligandPart>
</feature>
<feature type="binding site" evidence="3">
    <location>
        <position position="207"/>
    </location>
    <ligand>
        <name>Fe cation</name>
        <dbReference type="ChEBI" id="CHEBI:24875"/>
        <label>B</label>
    </ligand>
</feature>
<feature type="binding site" evidence="3">
    <location>
        <position position="258"/>
    </location>
    <ligand>
        <name>Fe cation</name>
        <dbReference type="ChEBI" id="CHEBI:24875"/>
        <label>B</label>
    </ligand>
</feature>
<feature type="binding site" evidence="3">
    <location>
        <position position="259"/>
    </location>
    <ligand>
        <name>Fe cation</name>
        <dbReference type="ChEBI" id="CHEBI:24875"/>
        <label>B</label>
    </ligand>
</feature>
<feature type="binding site" description="axial binding residue" evidence="3">
    <location>
        <position position="348"/>
    </location>
    <ligand>
        <name>heme b</name>
        <dbReference type="ChEBI" id="CHEBI:60344"/>
        <label>2; high-spin</label>
    </ligand>
    <ligandPart>
        <name>Fe</name>
        <dbReference type="ChEBI" id="CHEBI:18248"/>
    </ligandPart>
</feature>
<feature type="binding site" description="axial binding residue" evidence="3">
    <location>
        <position position="350"/>
    </location>
    <ligand>
        <name>heme b</name>
        <dbReference type="ChEBI" id="CHEBI:60344"/>
        <label>1; low-spin</label>
    </ligand>
    <ligandPart>
        <name>Fe</name>
        <dbReference type="ChEBI" id="CHEBI:18248"/>
    </ligandPart>
</feature>
<feature type="helix" evidence="4">
    <location>
        <begin position="11"/>
        <end position="15"/>
    </location>
</feature>
<feature type="helix" evidence="4">
    <location>
        <begin position="16"/>
        <end position="40"/>
    </location>
</feature>
<feature type="turn" evidence="4">
    <location>
        <begin position="44"/>
        <end position="50"/>
    </location>
</feature>
<feature type="helix" evidence="4">
    <location>
        <begin position="53"/>
        <end position="84"/>
    </location>
</feature>
<feature type="helix" evidence="4">
    <location>
        <begin position="91"/>
        <end position="114"/>
    </location>
</feature>
<feature type="helix" evidence="4">
    <location>
        <begin position="117"/>
        <end position="123"/>
    </location>
</feature>
<feature type="helix" evidence="4">
    <location>
        <begin position="126"/>
        <end position="128"/>
    </location>
</feature>
<feature type="helix" evidence="4">
    <location>
        <begin position="141"/>
        <end position="163"/>
    </location>
</feature>
<feature type="helix" evidence="4">
    <location>
        <begin position="169"/>
        <end position="185"/>
    </location>
</feature>
<feature type="helix" evidence="4">
    <location>
        <begin position="186"/>
        <end position="189"/>
    </location>
</feature>
<feature type="helix" evidence="4">
    <location>
        <begin position="195"/>
        <end position="210"/>
    </location>
</feature>
<feature type="helix" evidence="4">
    <location>
        <begin position="213"/>
        <end position="230"/>
    </location>
</feature>
<feature type="helix" evidence="4">
    <location>
        <begin position="234"/>
        <end position="255"/>
    </location>
</feature>
<feature type="helix" evidence="4">
    <location>
        <begin position="256"/>
        <end position="259"/>
    </location>
</feature>
<feature type="strand" evidence="4">
    <location>
        <begin position="261"/>
        <end position="265"/>
    </location>
</feature>
<feature type="helix" evidence="4">
    <location>
        <begin position="268"/>
        <end position="279"/>
    </location>
</feature>
<feature type="helix" evidence="4">
    <location>
        <begin position="281"/>
        <end position="296"/>
    </location>
</feature>
<feature type="helix" evidence="4">
    <location>
        <begin position="306"/>
        <end position="322"/>
    </location>
</feature>
<feature type="helix" evidence="4">
    <location>
        <begin position="324"/>
        <end position="331"/>
    </location>
</feature>
<feature type="helix" evidence="4">
    <location>
        <begin position="333"/>
        <end position="339"/>
    </location>
</feature>
<feature type="helix" evidence="4">
    <location>
        <begin position="343"/>
        <end position="368"/>
    </location>
</feature>
<feature type="turn" evidence="4">
    <location>
        <begin position="369"/>
        <end position="374"/>
    </location>
</feature>
<feature type="helix" evidence="4">
    <location>
        <begin position="381"/>
        <end position="416"/>
    </location>
</feature>
<feature type="turn" evidence="4">
    <location>
        <begin position="421"/>
        <end position="423"/>
    </location>
</feature>
<feature type="helix" evidence="4">
    <location>
        <begin position="427"/>
        <end position="433"/>
    </location>
</feature>
<feature type="helix" evidence="4">
    <location>
        <begin position="435"/>
        <end position="456"/>
    </location>
</feature>
<accession>Q59647</accession>
<gene>
    <name type="primary">norB</name>
    <name type="ordered locus">PA0524</name>
</gene>
<reference key="1">
    <citation type="journal article" date="1995" name="Biochim. Biophys. Acta">
        <title>The structural genes for nitric oxide reductase from Pseudomonas aeruginosa.</title>
        <authorList>
            <person name="Arai H."/>
            <person name="Igarashi Y."/>
            <person name="Kodama T."/>
        </authorList>
    </citation>
    <scope>NUCLEOTIDE SEQUENCE [GENOMIC DNA]</scope>
    <source>
        <strain>ATCC 15692 / DSM 22644 / CIP 104116 / JCM 14847 / LMG 12228 / 1C / PRS 101 / PAO1</strain>
    </source>
</reference>
<reference key="2">
    <citation type="journal article" date="2000" name="Nature">
        <title>Complete genome sequence of Pseudomonas aeruginosa PAO1, an opportunistic pathogen.</title>
        <authorList>
            <person name="Stover C.K."/>
            <person name="Pham X.-Q.T."/>
            <person name="Erwin A.L."/>
            <person name="Mizoguchi S.D."/>
            <person name="Warrener P."/>
            <person name="Hickey M.J."/>
            <person name="Brinkman F.S.L."/>
            <person name="Hufnagle W.O."/>
            <person name="Kowalik D.J."/>
            <person name="Lagrou M."/>
            <person name="Garber R.L."/>
            <person name="Goltry L."/>
            <person name="Tolentino E."/>
            <person name="Westbrock-Wadman S."/>
            <person name="Yuan Y."/>
            <person name="Brody L.L."/>
            <person name="Coulter S.N."/>
            <person name="Folger K.R."/>
            <person name="Kas A."/>
            <person name="Larbig K."/>
            <person name="Lim R.M."/>
            <person name="Smith K.A."/>
            <person name="Spencer D.H."/>
            <person name="Wong G.K.-S."/>
            <person name="Wu Z."/>
            <person name="Paulsen I.T."/>
            <person name="Reizer J."/>
            <person name="Saier M.H. Jr."/>
            <person name="Hancock R.E.W."/>
            <person name="Lory S."/>
            <person name="Olson M.V."/>
        </authorList>
    </citation>
    <scope>NUCLEOTIDE SEQUENCE [LARGE SCALE GENOMIC DNA]</scope>
    <source>
        <strain>ATCC 15692 / DSM 22644 / CIP 104116 / JCM 14847 / LMG 12228 / 1C / PRS 101 / PAO1</strain>
    </source>
</reference>
<comment type="function">
    <text evidence="1">Component of the anaerobic respiratory chain that transforms nitrate to dinitrogen (denitrification). NorB is the catalytic subunit of the enzyme complex. Shows proton pump activity across the membrane in denitrifying bacterial cells. The mononitrogen reduction is probably coupled to electron transport phosphorylation (By similarity).</text>
</comment>
<comment type="catalytic activity">
    <reaction>
        <text>nitrous oxide + 2 Fe(III)-[cytochrome c] + H2O = 2 nitric oxide + 2 Fe(II)-[cytochrome c] + 2 H(+)</text>
        <dbReference type="Rhea" id="RHEA:30211"/>
        <dbReference type="Rhea" id="RHEA-COMP:10350"/>
        <dbReference type="Rhea" id="RHEA-COMP:14399"/>
        <dbReference type="ChEBI" id="CHEBI:15377"/>
        <dbReference type="ChEBI" id="CHEBI:15378"/>
        <dbReference type="ChEBI" id="CHEBI:16480"/>
        <dbReference type="ChEBI" id="CHEBI:17045"/>
        <dbReference type="ChEBI" id="CHEBI:29033"/>
        <dbReference type="ChEBI" id="CHEBI:29034"/>
        <dbReference type="EC" id="1.7.2.5"/>
    </reaction>
</comment>
<comment type="pathway">
    <text>Nitrogen metabolism; nitrate reduction (denitrification); dinitrogen from nitrate: step 3/4.</text>
</comment>
<comment type="subunit">
    <text>Heterodimer of cytochromes b (large subunit) and c (small subunit).</text>
</comment>
<comment type="subcellular location">
    <subcellularLocation>
        <location evidence="3">Cell membrane</location>
        <topology evidence="3">Multi-pass membrane protein</topology>
    </subcellularLocation>
</comment>
<comment type="similarity">
    <text evidence="3">Belongs to the heme-copper respiratory oxidase family.</text>
</comment>
<sequence length="466" mass="52336">MMSPNGSLKFASQAVAKPYFVFALILFVGQILFGLIMGLQYVVGDFLFPAIPFNVARMVHTNLLIVWLLFGFMGAAYYLVPEESDCELYSPKLAWILFWVFAAAGVLTILGYLLVPYAGLARLTGNELWPTMGREFLEQPTISKAGIVIVALGFLFNVGMTVLRGRKTAISMVLMTGLIGLALLFLFSFYNPENLTRDKFYWWWVVHLWVEGVWELIMGAILAFVLVKITGVDREVIEKWLYVIIAMALISGIIGTGHHYFWIGVPGYWLWLGSVFSALEPLPFFAMVLFAFNTINRRRRRDYPNRAVALWAMGTTVMAFLGAGVWGFMHTLAPVNYYTHGTQLTAAHGHMAFYGAYAMIVMTIISYAMPRLRGIGEAMDNRSQVLEMWGFWLMTVAMVFITLFLSAAGVLQVWLQRMPADGAAMTFMATQDQLAIFYWLREGAGVVFLIGLVAYLLSFRRGKAAA</sequence>
<organism>
    <name type="scientific">Pseudomonas aeruginosa (strain ATCC 15692 / DSM 22644 / CIP 104116 / JCM 14847 / LMG 12228 / 1C / PRS 101 / PAO1)</name>
    <dbReference type="NCBI Taxonomy" id="208964"/>
    <lineage>
        <taxon>Bacteria</taxon>
        <taxon>Pseudomonadati</taxon>
        <taxon>Pseudomonadota</taxon>
        <taxon>Gammaproteobacteria</taxon>
        <taxon>Pseudomonadales</taxon>
        <taxon>Pseudomonadaceae</taxon>
        <taxon>Pseudomonas</taxon>
    </lineage>
</organism>